<keyword id="KW-0312">Gluconeogenesis</keyword>
<keyword id="KW-0324">Glycolysis</keyword>
<keyword id="KW-0413">Isomerase</keyword>
<evidence type="ECO:0000255" key="1">
    <source>
        <dbReference type="HAMAP-Rule" id="MF_01039"/>
    </source>
</evidence>
<organism>
    <name type="scientific">Polynucleobacter necessarius subsp. necessarius (strain STIR1)</name>
    <dbReference type="NCBI Taxonomy" id="452638"/>
    <lineage>
        <taxon>Bacteria</taxon>
        <taxon>Pseudomonadati</taxon>
        <taxon>Pseudomonadota</taxon>
        <taxon>Betaproteobacteria</taxon>
        <taxon>Burkholderiales</taxon>
        <taxon>Burkholderiaceae</taxon>
        <taxon>Polynucleobacter</taxon>
    </lineage>
</organism>
<accession>B1XS92</accession>
<name>GPMA_POLNS</name>
<feature type="chain" id="PRO_1000135963" description="2,3-bisphosphoglycerate-dependent phosphoglycerate mutase">
    <location>
        <begin position="1"/>
        <end position="229"/>
    </location>
</feature>
<feature type="active site" description="Tele-phosphohistidine intermediate" evidence="1">
    <location>
        <position position="9"/>
    </location>
</feature>
<feature type="active site" description="Proton donor/acceptor" evidence="1">
    <location>
        <position position="87"/>
    </location>
</feature>
<feature type="binding site" evidence="1">
    <location>
        <begin position="8"/>
        <end position="15"/>
    </location>
    <ligand>
        <name>substrate</name>
    </ligand>
</feature>
<feature type="binding site" evidence="1">
    <location>
        <begin position="21"/>
        <end position="22"/>
    </location>
    <ligand>
        <name>substrate</name>
    </ligand>
</feature>
<feature type="binding site" evidence="1">
    <location>
        <position position="60"/>
    </location>
    <ligand>
        <name>substrate</name>
    </ligand>
</feature>
<feature type="binding site" evidence="1">
    <location>
        <begin position="87"/>
        <end position="90"/>
    </location>
    <ligand>
        <name>substrate</name>
    </ligand>
</feature>
<feature type="binding site" evidence="1">
    <location>
        <position position="98"/>
    </location>
    <ligand>
        <name>substrate</name>
    </ligand>
</feature>
<feature type="binding site" evidence="1">
    <location>
        <begin position="114"/>
        <end position="115"/>
    </location>
    <ligand>
        <name>substrate</name>
    </ligand>
</feature>
<feature type="binding site" evidence="1">
    <location>
        <begin position="183"/>
        <end position="184"/>
    </location>
    <ligand>
        <name>substrate</name>
    </ligand>
</feature>
<feature type="site" description="Transition state stabilizer" evidence="1">
    <location>
        <position position="182"/>
    </location>
</feature>
<proteinExistence type="inferred from homology"/>
<gene>
    <name evidence="1" type="primary">gpmA</name>
    <name type="ordered locus">Pnec_1653</name>
</gene>
<reference key="1">
    <citation type="journal article" date="2013" name="Proc. Natl. Acad. Sci. U.S.A.">
        <title>Polynucleobacter necessarius, a model for genome reduction in both free-living and symbiotic bacteria.</title>
        <authorList>
            <person name="Boscaro V."/>
            <person name="Felletti M."/>
            <person name="Vannini C."/>
            <person name="Ackerman M.S."/>
            <person name="Chain P.S."/>
            <person name="Malfatti S."/>
            <person name="Vergez L.M."/>
            <person name="Shin M."/>
            <person name="Doak T.G."/>
            <person name="Lynch M."/>
            <person name="Petroni G."/>
        </authorList>
    </citation>
    <scope>NUCLEOTIDE SEQUENCE [LARGE SCALE GENOMIC DNA]</scope>
    <source>
        <strain>STIR1</strain>
    </source>
</reference>
<protein>
    <recommendedName>
        <fullName evidence="1">2,3-bisphosphoglycerate-dependent phosphoglycerate mutase</fullName>
        <shortName evidence="1">BPG-dependent PGAM</shortName>
        <shortName evidence="1">PGAM</shortName>
        <shortName evidence="1">Phosphoglyceromutase</shortName>
        <shortName evidence="1">dPGM</shortName>
        <ecNumber evidence="1">5.4.2.11</ecNumber>
    </recommendedName>
</protein>
<sequence>MKQLVLIRHGESAWNLENRFTGWADVDLTPKGAEQALAAGENLKKAGYEFDVAYTSVLRRAIRTLWNVQDTMDLMWLPVVHSWRLNERHYGALTGLNKAETAEKYGDEQVHIWRRSYDVRPPLLEHEDERHPKNDPRYSKLNSSDIPLGECLKDNVERVLPLWNESIAPALKAGKRVLLVAHGNSIRSLIKYLDQVSNEDIMEVNVPNGIPLVYELDDDLKPIQHFYLD</sequence>
<dbReference type="EC" id="5.4.2.11" evidence="1"/>
<dbReference type="EMBL" id="CP001010">
    <property type="protein sequence ID" value="ACB44727.1"/>
    <property type="molecule type" value="Genomic_DNA"/>
</dbReference>
<dbReference type="SMR" id="B1XS92"/>
<dbReference type="STRING" id="452638.Pnec_1653"/>
<dbReference type="KEGG" id="pne:Pnec_1653"/>
<dbReference type="eggNOG" id="COG0588">
    <property type="taxonomic scope" value="Bacteria"/>
</dbReference>
<dbReference type="HOGENOM" id="CLU_033323_1_1_4"/>
<dbReference type="OrthoDB" id="9781415at2"/>
<dbReference type="UniPathway" id="UPA00109">
    <property type="reaction ID" value="UER00186"/>
</dbReference>
<dbReference type="GO" id="GO:0004619">
    <property type="term" value="F:phosphoglycerate mutase activity"/>
    <property type="evidence" value="ECO:0007669"/>
    <property type="project" value="UniProtKB-EC"/>
</dbReference>
<dbReference type="GO" id="GO:0006094">
    <property type="term" value="P:gluconeogenesis"/>
    <property type="evidence" value="ECO:0007669"/>
    <property type="project" value="UniProtKB-UniRule"/>
</dbReference>
<dbReference type="GO" id="GO:0006096">
    <property type="term" value="P:glycolytic process"/>
    <property type="evidence" value="ECO:0007669"/>
    <property type="project" value="UniProtKB-UniRule"/>
</dbReference>
<dbReference type="CDD" id="cd07067">
    <property type="entry name" value="HP_PGM_like"/>
    <property type="match status" value="1"/>
</dbReference>
<dbReference type="FunFam" id="3.40.50.1240:FF:000003">
    <property type="entry name" value="2,3-bisphosphoglycerate-dependent phosphoglycerate mutase"/>
    <property type="match status" value="1"/>
</dbReference>
<dbReference type="Gene3D" id="3.40.50.1240">
    <property type="entry name" value="Phosphoglycerate mutase-like"/>
    <property type="match status" value="1"/>
</dbReference>
<dbReference type="HAMAP" id="MF_01039">
    <property type="entry name" value="PGAM_GpmA"/>
    <property type="match status" value="1"/>
</dbReference>
<dbReference type="InterPro" id="IPR013078">
    <property type="entry name" value="His_Pase_superF_clade-1"/>
</dbReference>
<dbReference type="InterPro" id="IPR029033">
    <property type="entry name" value="His_PPase_superfam"/>
</dbReference>
<dbReference type="InterPro" id="IPR001345">
    <property type="entry name" value="PG/BPGM_mutase_AS"/>
</dbReference>
<dbReference type="InterPro" id="IPR005952">
    <property type="entry name" value="Phosphogly_mut1"/>
</dbReference>
<dbReference type="NCBIfam" id="TIGR01258">
    <property type="entry name" value="pgm_1"/>
    <property type="match status" value="1"/>
</dbReference>
<dbReference type="NCBIfam" id="NF010713">
    <property type="entry name" value="PRK14115.1"/>
    <property type="match status" value="1"/>
</dbReference>
<dbReference type="PANTHER" id="PTHR11931">
    <property type="entry name" value="PHOSPHOGLYCERATE MUTASE"/>
    <property type="match status" value="1"/>
</dbReference>
<dbReference type="Pfam" id="PF00300">
    <property type="entry name" value="His_Phos_1"/>
    <property type="match status" value="2"/>
</dbReference>
<dbReference type="PIRSF" id="PIRSF000709">
    <property type="entry name" value="6PFK_2-Ptase"/>
    <property type="match status" value="1"/>
</dbReference>
<dbReference type="SMART" id="SM00855">
    <property type="entry name" value="PGAM"/>
    <property type="match status" value="1"/>
</dbReference>
<dbReference type="SUPFAM" id="SSF53254">
    <property type="entry name" value="Phosphoglycerate mutase-like"/>
    <property type="match status" value="1"/>
</dbReference>
<dbReference type="PROSITE" id="PS00175">
    <property type="entry name" value="PG_MUTASE"/>
    <property type="match status" value="1"/>
</dbReference>
<comment type="function">
    <text evidence="1">Catalyzes the interconversion of 2-phosphoglycerate and 3-phosphoglycerate.</text>
</comment>
<comment type="catalytic activity">
    <reaction evidence="1">
        <text>(2R)-2-phosphoglycerate = (2R)-3-phosphoglycerate</text>
        <dbReference type="Rhea" id="RHEA:15901"/>
        <dbReference type="ChEBI" id="CHEBI:58272"/>
        <dbReference type="ChEBI" id="CHEBI:58289"/>
        <dbReference type="EC" id="5.4.2.11"/>
    </reaction>
</comment>
<comment type="pathway">
    <text evidence="1">Carbohydrate degradation; glycolysis; pyruvate from D-glyceraldehyde 3-phosphate: step 3/5.</text>
</comment>
<comment type="subunit">
    <text evidence="1">Homodimer.</text>
</comment>
<comment type="similarity">
    <text evidence="1">Belongs to the phosphoglycerate mutase family. BPG-dependent PGAM subfamily.</text>
</comment>